<gene>
    <name type="primary">POT4</name>
    <name type="synonym">KT4</name>
    <name type="synonym">KUP3</name>
    <name type="ordered locus">At3g02050</name>
    <name type="ORF">F1C9.17</name>
</gene>
<name>POT4_ARATH</name>
<accession>Q9LD18</accession>
<accession>O22400</accession>
<accession>Q9SGA3</accession>
<keyword id="KW-1003">Cell membrane</keyword>
<keyword id="KW-0406">Ion transport</keyword>
<keyword id="KW-0472">Membrane</keyword>
<keyword id="KW-0597">Phosphoprotein</keyword>
<keyword id="KW-0630">Potassium</keyword>
<keyword id="KW-0633">Potassium transport</keyword>
<keyword id="KW-1185">Reference proteome</keyword>
<keyword id="KW-0812">Transmembrane</keyword>
<keyword id="KW-1133">Transmembrane helix</keyword>
<keyword id="KW-0813">Transport</keyword>
<proteinExistence type="evidence at protein level"/>
<sequence length="789" mass="87411">MAPAESGVSPRRNPSQLSWMNLSSNLILAYQSFGVVYGDLSTSPLYVFPSTFIGKLHKHHNEDAVFGAFSLIFWTLTLIPLLKYLLVLLSADDNGEGGTFALYSLLCRHAKLSLLPNQQAADEELSAYKFGPSTDTVTSSPFRTFLEKHKRLRTALLLVVLFGAAMVIGDGVLTPALSVLSSLSGLQATEKNVTDGELLVLACVILVGLFALQHCGTHRVAFMFAPIVIIWLISIFFIGLYNIIRWNPKIIHAVSPLYIIKFFRVTGQDGWISLGGVLLSVTGTEAMFANLGHFTSVSIRVAFAVVVYPCLVVQYMGQAAFLSKNLGSIPNSFYDSVPDPVFWPVFVIATLAAIVGSQAVITTTFSIIKQCHALGCFPRIKVVHTSKHIYGQIYIPEINWILMILTLAMAIGFRDTTLIGNAYGIACMVVMFITTFFMALVIVVVWQKSCFLAALFLGTLWIIEGVYLSAALMKVTEGGWVPFVLTFIFMIAMYVWHYGTRRKYSFDLHNKVSLKWLLGLGPSLGIVRVPGIGLVYSELATGVPAIFSHFVTNLPAFHKVVVFVCVKSVPVPHVSPEERFLIGRVCPKPYRMYRCIVRYGYKDIQREDGDFENQLVQSIAEFIQMEASDLQSSASESQSNDGRMAVLSSQKSLSNSILTVSEVEEIDYADPTIQSSKSMTLQSLRSVYEDEYPQGQVRRRHVRFQLTASSGGMGSSVREELMDLIRAKEAGVAYIMGHSYVKSRKSSSWLKKMAIDIGYSFLRKNCRGPAVALNIPHISLIEVGMIYYV</sequence>
<dbReference type="EMBL" id="AF207621">
    <property type="protein sequence ID" value="AAF19432.2"/>
    <property type="molecule type" value="mRNA"/>
</dbReference>
<dbReference type="EMBL" id="AC011664">
    <property type="protein sequence ID" value="AAF14830.1"/>
    <property type="molecule type" value="Genomic_DNA"/>
</dbReference>
<dbReference type="EMBL" id="CP002686">
    <property type="protein sequence ID" value="AEE73753.1"/>
    <property type="molecule type" value="Genomic_DNA"/>
</dbReference>
<dbReference type="EMBL" id="AY062747">
    <property type="protein sequence ID" value="AAL32825.1"/>
    <property type="molecule type" value="mRNA"/>
</dbReference>
<dbReference type="EMBL" id="BT003375">
    <property type="protein sequence ID" value="AAO30038.1"/>
    <property type="molecule type" value="mRNA"/>
</dbReference>
<dbReference type="EMBL" id="AF012659">
    <property type="protein sequence ID" value="AAC49847.1"/>
    <property type="molecule type" value="mRNA"/>
</dbReference>
<dbReference type="RefSeq" id="NP_186854.1">
    <property type="nucleotide sequence ID" value="NM_111071.3"/>
</dbReference>
<dbReference type="FunCoup" id="Q9LD18">
    <property type="interactions" value="81"/>
</dbReference>
<dbReference type="STRING" id="3702.Q9LD18"/>
<dbReference type="iPTMnet" id="Q9LD18"/>
<dbReference type="PaxDb" id="3702-AT3G02050.1"/>
<dbReference type="ProteomicsDB" id="250606"/>
<dbReference type="EnsemblPlants" id="AT3G02050.1">
    <property type="protein sequence ID" value="AT3G02050.1"/>
    <property type="gene ID" value="AT3G02050"/>
</dbReference>
<dbReference type="GeneID" id="821063"/>
<dbReference type="Gramene" id="AT3G02050.1">
    <property type="protein sequence ID" value="AT3G02050.1"/>
    <property type="gene ID" value="AT3G02050"/>
</dbReference>
<dbReference type="KEGG" id="ath:AT3G02050"/>
<dbReference type="Araport" id="AT3G02050"/>
<dbReference type="TAIR" id="AT3G02050">
    <property type="gene designation" value="KUP3"/>
</dbReference>
<dbReference type="eggNOG" id="ENOG502QPSA">
    <property type="taxonomic scope" value="Eukaryota"/>
</dbReference>
<dbReference type="HOGENOM" id="CLU_008142_2_0_1"/>
<dbReference type="InParanoid" id="Q9LD18"/>
<dbReference type="OMA" id="IFHGQLY"/>
<dbReference type="PhylomeDB" id="Q9LD18"/>
<dbReference type="PRO" id="PR:Q9LD18"/>
<dbReference type="Proteomes" id="UP000006548">
    <property type="component" value="Chromosome 3"/>
</dbReference>
<dbReference type="ExpressionAtlas" id="Q9LD18">
    <property type="expression patterns" value="baseline and differential"/>
</dbReference>
<dbReference type="GO" id="GO:0005829">
    <property type="term" value="C:cytosol"/>
    <property type="evidence" value="ECO:0007005"/>
    <property type="project" value="TAIR"/>
</dbReference>
<dbReference type="GO" id="GO:0005886">
    <property type="term" value="C:plasma membrane"/>
    <property type="evidence" value="ECO:0007669"/>
    <property type="project" value="UniProtKB-SubCell"/>
</dbReference>
<dbReference type="GO" id="GO:0015079">
    <property type="term" value="F:potassium ion transmembrane transporter activity"/>
    <property type="evidence" value="ECO:0007669"/>
    <property type="project" value="InterPro"/>
</dbReference>
<dbReference type="InterPro" id="IPR003855">
    <property type="entry name" value="K+_transporter"/>
</dbReference>
<dbReference type="InterPro" id="IPR053952">
    <property type="entry name" value="K_trans_C"/>
</dbReference>
<dbReference type="InterPro" id="IPR053951">
    <property type="entry name" value="K_trans_N"/>
</dbReference>
<dbReference type="NCBIfam" id="TIGR00794">
    <property type="entry name" value="kup"/>
    <property type="match status" value="1"/>
</dbReference>
<dbReference type="PANTHER" id="PTHR30540:SF83">
    <property type="entry name" value="K+ POTASSIUM TRANSPORTER"/>
    <property type="match status" value="1"/>
</dbReference>
<dbReference type="PANTHER" id="PTHR30540">
    <property type="entry name" value="OSMOTIC STRESS POTASSIUM TRANSPORTER"/>
    <property type="match status" value="1"/>
</dbReference>
<dbReference type="Pfam" id="PF02705">
    <property type="entry name" value="K_trans"/>
    <property type="match status" value="1"/>
</dbReference>
<dbReference type="Pfam" id="PF22776">
    <property type="entry name" value="K_trans_C"/>
    <property type="match status" value="1"/>
</dbReference>
<comment type="function">
    <text evidence="2">High-affinity potassium transporter.</text>
</comment>
<comment type="subcellular location">
    <subcellularLocation>
        <location evidence="3">Cell membrane</location>
        <topology evidence="3">Multi-pass membrane protein</topology>
    </subcellularLocation>
</comment>
<comment type="tissue specificity">
    <text evidence="2">Detected at very low levels in roots, stems, leaves and flowers of mature plants and strongly expressed in the roots of potassium-starved plants.</text>
</comment>
<comment type="induction">
    <text evidence="2">By potassium starvation.</text>
</comment>
<comment type="similarity">
    <text evidence="3">Belongs to the HAK/KUP transporter (TC 2.A.72.3) family.</text>
</comment>
<evidence type="ECO:0000255" key="1"/>
<evidence type="ECO:0000269" key="2">
    <source>
    </source>
</evidence>
<evidence type="ECO:0000305" key="3"/>
<evidence type="ECO:0007744" key="4">
    <source>
    </source>
</evidence>
<organism>
    <name type="scientific">Arabidopsis thaliana</name>
    <name type="common">Mouse-ear cress</name>
    <dbReference type="NCBI Taxonomy" id="3702"/>
    <lineage>
        <taxon>Eukaryota</taxon>
        <taxon>Viridiplantae</taxon>
        <taxon>Streptophyta</taxon>
        <taxon>Embryophyta</taxon>
        <taxon>Tracheophyta</taxon>
        <taxon>Spermatophyta</taxon>
        <taxon>Magnoliopsida</taxon>
        <taxon>eudicotyledons</taxon>
        <taxon>Gunneridae</taxon>
        <taxon>Pentapetalae</taxon>
        <taxon>rosids</taxon>
        <taxon>malvids</taxon>
        <taxon>Brassicales</taxon>
        <taxon>Brassicaceae</taxon>
        <taxon>Camelineae</taxon>
        <taxon>Arabidopsis</taxon>
    </lineage>
</organism>
<feature type="chain" id="PRO_0000209080" description="Potassium transporter 4">
    <location>
        <begin position="1"/>
        <end position="789"/>
    </location>
</feature>
<feature type="topological domain" description="Cytoplasmic" evidence="1">
    <location>
        <begin position="1"/>
        <end position="32"/>
    </location>
</feature>
<feature type="transmembrane region" description="Helical" evidence="1">
    <location>
        <begin position="33"/>
        <end position="53"/>
    </location>
</feature>
<feature type="topological domain" description="Extracellular" evidence="1">
    <location>
        <begin position="54"/>
        <end position="68"/>
    </location>
</feature>
<feature type="transmembrane region" description="Helical" evidence="1">
    <location>
        <begin position="69"/>
        <end position="89"/>
    </location>
</feature>
<feature type="topological domain" description="Cytoplasmic" evidence="1">
    <location>
        <begin position="90"/>
        <end position="154"/>
    </location>
</feature>
<feature type="transmembrane region" description="Helical" evidence="1">
    <location>
        <begin position="155"/>
        <end position="175"/>
    </location>
</feature>
<feature type="topological domain" description="Extracellular" evidence="1">
    <location>
        <begin position="176"/>
        <end position="195"/>
    </location>
</feature>
<feature type="transmembrane region" description="Helical" evidence="1">
    <location>
        <begin position="196"/>
        <end position="216"/>
    </location>
</feature>
<feature type="topological domain" description="Cytoplasmic" evidence="1">
    <location>
        <begin position="217"/>
        <end position="219"/>
    </location>
</feature>
<feature type="transmembrane region" description="Helical" evidence="1">
    <location>
        <begin position="220"/>
        <end position="240"/>
    </location>
</feature>
<feature type="topological domain" description="Extracellular" evidence="1">
    <location>
        <begin position="241"/>
        <end position="270"/>
    </location>
</feature>
<feature type="transmembrane region" description="Helical" evidence="1">
    <location>
        <begin position="271"/>
        <end position="291"/>
    </location>
</feature>
<feature type="topological domain" description="Cytoplasmic" evidence="1">
    <location>
        <begin position="292"/>
        <end position="300"/>
    </location>
</feature>
<feature type="transmembrane region" description="Helical" evidence="1">
    <location>
        <begin position="301"/>
        <end position="321"/>
    </location>
</feature>
<feature type="topological domain" description="Extracellular" evidence="1">
    <location>
        <begin position="322"/>
        <end position="340"/>
    </location>
</feature>
<feature type="transmembrane region" description="Helical" evidence="1">
    <location>
        <begin position="341"/>
        <end position="361"/>
    </location>
</feature>
<feature type="topological domain" description="Cytoplasmic" evidence="1">
    <location>
        <begin position="362"/>
        <end position="392"/>
    </location>
</feature>
<feature type="transmembrane region" description="Helical" evidence="1">
    <location>
        <begin position="393"/>
        <end position="413"/>
    </location>
</feature>
<feature type="topological domain" description="Extracellular" evidence="1">
    <location>
        <begin position="414"/>
        <end position="424"/>
    </location>
</feature>
<feature type="transmembrane region" description="Helical" evidence="1">
    <location>
        <begin position="425"/>
        <end position="445"/>
    </location>
</feature>
<feature type="topological domain" description="Cytoplasmic" evidence="1">
    <location>
        <begin position="446"/>
        <end position="450"/>
    </location>
</feature>
<feature type="transmembrane region" description="Helical" evidence="1">
    <location>
        <begin position="451"/>
        <end position="471"/>
    </location>
</feature>
<feature type="topological domain" description="Extracellular" evidence="1">
    <location>
        <begin position="472"/>
        <end position="478"/>
    </location>
</feature>
<feature type="transmembrane region" description="Helical" evidence="1">
    <location>
        <begin position="479"/>
        <end position="499"/>
    </location>
</feature>
<feature type="topological domain" description="Cytoplasmic" evidence="1">
    <location>
        <begin position="500"/>
        <end position="789"/>
    </location>
</feature>
<feature type="modified residue" description="Phosphoserine" evidence="4">
    <location>
        <position position="9"/>
    </location>
</feature>
<feature type="sequence conflict" description="In Ref. 1; AAF19432." evidence="3" ref="1">
    <original>HV</original>
    <variation>SLF</variation>
    <location>
        <begin position="573"/>
        <end position="574"/>
    </location>
</feature>
<feature type="sequence conflict" description="In Ref. 1; AAF19432." evidence="3" ref="1">
    <original>DLIR</original>
    <variation>GSDT</variation>
    <location>
        <begin position="723"/>
        <end position="726"/>
    </location>
</feature>
<reference key="1">
    <citation type="journal article" date="1998" name="Plant Cell">
        <title>AtKUP1: an Arabidopsis gene encoding high-affinity potassium transport activity.</title>
        <authorList>
            <person name="Kim E.J."/>
            <person name="Kwak J.M."/>
            <person name="Uozumi N."/>
            <person name="Schroeder J.I."/>
        </authorList>
    </citation>
    <scope>NUCLEOTIDE SEQUENCE [MRNA]</scope>
    <scope>FUNCTION</scope>
    <scope>TISSUE SPECIFICITY</scope>
    <scope>INDUCTION</scope>
    <source>
        <strain>cv. Columbia</strain>
    </source>
</reference>
<reference key="2">
    <citation type="journal article" date="2000" name="Nature">
        <title>Sequence and analysis of chromosome 3 of the plant Arabidopsis thaliana.</title>
        <authorList>
            <person name="Salanoubat M."/>
            <person name="Lemcke K."/>
            <person name="Rieger M."/>
            <person name="Ansorge W."/>
            <person name="Unseld M."/>
            <person name="Fartmann B."/>
            <person name="Valle G."/>
            <person name="Bloecker H."/>
            <person name="Perez-Alonso M."/>
            <person name="Obermaier B."/>
            <person name="Delseny M."/>
            <person name="Boutry M."/>
            <person name="Grivell L.A."/>
            <person name="Mache R."/>
            <person name="Puigdomenech P."/>
            <person name="De Simone V."/>
            <person name="Choisne N."/>
            <person name="Artiguenave F."/>
            <person name="Robert C."/>
            <person name="Brottier P."/>
            <person name="Wincker P."/>
            <person name="Cattolico L."/>
            <person name="Weissenbach J."/>
            <person name="Saurin W."/>
            <person name="Quetier F."/>
            <person name="Schaefer M."/>
            <person name="Mueller-Auer S."/>
            <person name="Gabel C."/>
            <person name="Fuchs M."/>
            <person name="Benes V."/>
            <person name="Wurmbach E."/>
            <person name="Drzonek H."/>
            <person name="Erfle H."/>
            <person name="Jordan N."/>
            <person name="Bangert S."/>
            <person name="Wiedelmann R."/>
            <person name="Kranz H."/>
            <person name="Voss H."/>
            <person name="Holland R."/>
            <person name="Brandt P."/>
            <person name="Nyakatura G."/>
            <person name="Vezzi A."/>
            <person name="D'Angelo M."/>
            <person name="Pallavicini A."/>
            <person name="Toppo S."/>
            <person name="Simionati B."/>
            <person name="Conrad A."/>
            <person name="Hornischer K."/>
            <person name="Kauer G."/>
            <person name="Loehnert T.-H."/>
            <person name="Nordsiek G."/>
            <person name="Reichelt J."/>
            <person name="Scharfe M."/>
            <person name="Schoen O."/>
            <person name="Bargues M."/>
            <person name="Terol J."/>
            <person name="Climent J."/>
            <person name="Navarro P."/>
            <person name="Collado C."/>
            <person name="Perez-Perez A."/>
            <person name="Ottenwaelder B."/>
            <person name="Duchemin D."/>
            <person name="Cooke R."/>
            <person name="Laudie M."/>
            <person name="Berger-Llauro C."/>
            <person name="Purnelle B."/>
            <person name="Masuy D."/>
            <person name="de Haan M."/>
            <person name="Maarse A.C."/>
            <person name="Alcaraz J.-P."/>
            <person name="Cottet A."/>
            <person name="Casacuberta E."/>
            <person name="Monfort A."/>
            <person name="Argiriou A."/>
            <person name="Flores M."/>
            <person name="Liguori R."/>
            <person name="Vitale D."/>
            <person name="Mannhaupt G."/>
            <person name="Haase D."/>
            <person name="Schoof H."/>
            <person name="Rudd S."/>
            <person name="Zaccaria P."/>
            <person name="Mewes H.-W."/>
            <person name="Mayer K.F.X."/>
            <person name="Kaul S."/>
            <person name="Town C.D."/>
            <person name="Koo H.L."/>
            <person name="Tallon L.J."/>
            <person name="Jenkins J."/>
            <person name="Rooney T."/>
            <person name="Rizzo M."/>
            <person name="Walts A."/>
            <person name="Utterback T."/>
            <person name="Fujii C.Y."/>
            <person name="Shea T.P."/>
            <person name="Creasy T.H."/>
            <person name="Haas B."/>
            <person name="Maiti R."/>
            <person name="Wu D."/>
            <person name="Peterson J."/>
            <person name="Van Aken S."/>
            <person name="Pai G."/>
            <person name="Militscher J."/>
            <person name="Sellers P."/>
            <person name="Gill J.E."/>
            <person name="Feldblyum T.V."/>
            <person name="Preuss D."/>
            <person name="Lin X."/>
            <person name="Nierman W.C."/>
            <person name="Salzberg S.L."/>
            <person name="White O."/>
            <person name="Venter J.C."/>
            <person name="Fraser C.M."/>
            <person name="Kaneko T."/>
            <person name="Nakamura Y."/>
            <person name="Sato S."/>
            <person name="Kato T."/>
            <person name="Asamizu E."/>
            <person name="Sasamoto S."/>
            <person name="Kimura T."/>
            <person name="Idesawa K."/>
            <person name="Kawashima K."/>
            <person name="Kishida Y."/>
            <person name="Kiyokawa C."/>
            <person name="Kohara M."/>
            <person name="Matsumoto M."/>
            <person name="Matsuno A."/>
            <person name="Muraki A."/>
            <person name="Nakayama S."/>
            <person name="Nakazaki N."/>
            <person name="Shinpo S."/>
            <person name="Takeuchi C."/>
            <person name="Wada T."/>
            <person name="Watanabe A."/>
            <person name="Yamada M."/>
            <person name="Yasuda M."/>
            <person name="Tabata S."/>
        </authorList>
    </citation>
    <scope>NUCLEOTIDE SEQUENCE [LARGE SCALE GENOMIC DNA]</scope>
    <source>
        <strain>cv. Columbia</strain>
    </source>
</reference>
<reference key="3">
    <citation type="journal article" date="2017" name="Plant J.">
        <title>Araport11: a complete reannotation of the Arabidopsis thaliana reference genome.</title>
        <authorList>
            <person name="Cheng C.Y."/>
            <person name="Krishnakumar V."/>
            <person name="Chan A.P."/>
            <person name="Thibaud-Nissen F."/>
            <person name="Schobel S."/>
            <person name="Town C.D."/>
        </authorList>
    </citation>
    <scope>GENOME REANNOTATION</scope>
    <source>
        <strain>cv. Columbia</strain>
    </source>
</reference>
<reference key="4">
    <citation type="journal article" date="2003" name="Science">
        <title>Empirical analysis of transcriptional activity in the Arabidopsis genome.</title>
        <authorList>
            <person name="Yamada K."/>
            <person name="Lim J."/>
            <person name="Dale J.M."/>
            <person name="Chen H."/>
            <person name="Shinn P."/>
            <person name="Palm C.J."/>
            <person name="Southwick A.M."/>
            <person name="Wu H.C."/>
            <person name="Kim C.J."/>
            <person name="Nguyen M."/>
            <person name="Pham P.K."/>
            <person name="Cheuk R.F."/>
            <person name="Karlin-Newmann G."/>
            <person name="Liu S.X."/>
            <person name="Lam B."/>
            <person name="Sakano H."/>
            <person name="Wu T."/>
            <person name="Yu G."/>
            <person name="Miranda M."/>
            <person name="Quach H.L."/>
            <person name="Tripp M."/>
            <person name="Chang C.H."/>
            <person name="Lee J.M."/>
            <person name="Toriumi M.J."/>
            <person name="Chan M.M."/>
            <person name="Tang C.C."/>
            <person name="Onodera C.S."/>
            <person name="Deng J.M."/>
            <person name="Akiyama K."/>
            <person name="Ansari Y."/>
            <person name="Arakawa T."/>
            <person name="Banh J."/>
            <person name="Banno F."/>
            <person name="Bowser L."/>
            <person name="Brooks S.Y."/>
            <person name="Carninci P."/>
            <person name="Chao Q."/>
            <person name="Choy N."/>
            <person name="Enju A."/>
            <person name="Goldsmith A.D."/>
            <person name="Gurjal M."/>
            <person name="Hansen N.F."/>
            <person name="Hayashizaki Y."/>
            <person name="Johnson-Hopson C."/>
            <person name="Hsuan V.W."/>
            <person name="Iida K."/>
            <person name="Karnes M."/>
            <person name="Khan S."/>
            <person name="Koesema E."/>
            <person name="Ishida J."/>
            <person name="Jiang P.X."/>
            <person name="Jones T."/>
            <person name="Kawai J."/>
            <person name="Kamiya A."/>
            <person name="Meyers C."/>
            <person name="Nakajima M."/>
            <person name="Narusaka M."/>
            <person name="Seki M."/>
            <person name="Sakurai T."/>
            <person name="Satou M."/>
            <person name="Tamse R."/>
            <person name="Vaysberg M."/>
            <person name="Wallender E.K."/>
            <person name="Wong C."/>
            <person name="Yamamura Y."/>
            <person name="Yuan S."/>
            <person name="Shinozaki K."/>
            <person name="Davis R.W."/>
            <person name="Theologis A."/>
            <person name="Ecker J.R."/>
        </authorList>
    </citation>
    <scope>NUCLEOTIDE SEQUENCE [LARGE SCALE MRNA]</scope>
    <source>
        <strain>cv. Columbia</strain>
    </source>
</reference>
<reference key="5">
    <citation type="journal article" date="1997" name="FEBS Lett.">
        <title>A new family of K+ transporters from Arabidopsis that are conserved across phyla.</title>
        <authorList>
            <person name="Quintero F.J."/>
            <person name="Blatt M.R."/>
        </authorList>
    </citation>
    <scope>NUCLEOTIDE SEQUENCE [MRNA] OF 1-273</scope>
    <source>
        <strain>cv. Columbia</strain>
    </source>
</reference>
<reference key="6">
    <citation type="journal article" date="2001" name="Plant Physiol.">
        <title>Phylogenetic relationships within cation transporter families of Arabidopsis.</title>
        <authorList>
            <person name="Maeser P."/>
            <person name="Thomine S."/>
            <person name="Schroeder J.I."/>
            <person name="Ward J.M."/>
            <person name="Hirschi K."/>
            <person name="Sze H."/>
            <person name="Talke I.N."/>
            <person name="Amtmann A."/>
            <person name="Maathuis F.J.M."/>
            <person name="Sanders D."/>
            <person name="Harper J.F."/>
            <person name="Tchieu J."/>
            <person name="Gribskov M."/>
            <person name="Persans M.W."/>
            <person name="Salt D.E."/>
            <person name="Kim S.A."/>
            <person name="Guerinot M.L."/>
        </authorList>
    </citation>
    <scope>GENE FAMILY</scope>
    <scope>NOMENCLATURE</scope>
</reference>
<reference key="7">
    <citation type="journal article" date="2009" name="Plant Physiol.">
        <title>Large-scale Arabidopsis phosphoproteome profiling reveals novel chloroplast kinase substrates and phosphorylation networks.</title>
        <authorList>
            <person name="Reiland S."/>
            <person name="Messerli G."/>
            <person name="Baerenfaller K."/>
            <person name="Gerrits B."/>
            <person name="Endler A."/>
            <person name="Grossmann J."/>
            <person name="Gruissem W."/>
            <person name="Baginsky S."/>
        </authorList>
    </citation>
    <scope>PHOSPHORYLATION [LARGE SCALE ANALYSIS] AT SER-9</scope>
    <scope>IDENTIFICATION BY MASS SPECTROMETRY [LARGE SCALE ANALYSIS]</scope>
</reference>
<protein>
    <recommendedName>
        <fullName>Potassium transporter 4</fullName>
        <shortName>AtKT4</shortName>
        <shortName>AtKUP3</shortName>
        <shortName>AtPOT4</shortName>
    </recommendedName>
</protein>